<accession>Q5F4G0</accession>
<gene>
    <name type="primary">MT-CYB</name>
    <name type="synonym">COB</name>
    <name type="synonym">CYTB</name>
    <name type="synonym">MTCYB</name>
</gene>
<name>CYB_MYOSO</name>
<feature type="chain" id="PRO_0000254732" description="Cytochrome b">
    <location>
        <begin position="1"/>
        <end position="379"/>
    </location>
</feature>
<feature type="transmembrane region" description="Helical" evidence="2">
    <location>
        <begin position="33"/>
        <end position="53"/>
    </location>
</feature>
<feature type="transmembrane region" description="Helical" evidence="2">
    <location>
        <begin position="77"/>
        <end position="98"/>
    </location>
</feature>
<feature type="transmembrane region" description="Helical" evidence="2">
    <location>
        <begin position="113"/>
        <end position="133"/>
    </location>
</feature>
<feature type="transmembrane region" description="Helical" evidence="2">
    <location>
        <begin position="178"/>
        <end position="198"/>
    </location>
</feature>
<feature type="transmembrane region" description="Helical" evidence="2">
    <location>
        <begin position="226"/>
        <end position="246"/>
    </location>
</feature>
<feature type="transmembrane region" description="Helical" evidence="2">
    <location>
        <begin position="288"/>
        <end position="308"/>
    </location>
</feature>
<feature type="transmembrane region" description="Helical" evidence="2">
    <location>
        <begin position="320"/>
        <end position="340"/>
    </location>
</feature>
<feature type="transmembrane region" description="Helical" evidence="2">
    <location>
        <begin position="347"/>
        <end position="367"/>
    </location>
</feature>
<feature type="binding site" description="axial binding residue" evidence="2">
    <location>
        <position position="83"/>
    </location>
    <ligand>
        <name>heme b</name>
        <dbReference type="ChEBI" id="CHEBI:60344"/>
        <label>b562</label>
    </ligand>
    <ligandPart>
        <name>Fe</name>
        <dbReference type="ChEBI" id="CHEBI:18248"/>
    </ligandPart>
</feature>
<feature type="binding site" description="axial binding residue" evidence="2">
    <location>
        <position position="97"/>
    </location>
    <ligand>
        <name>heme b</name>
        <dbReference type="ChEBI" id="CHEBI:60344"/>
        <label>b566</label>
    </ligand>
    <ligandPart>
        <name>Fe</name>
        <dbReference type="ChEBI" id="CHEBI:18248"/>
    </ligandPart>
</feature>
<feature type="binding site" description="axial binding residue" evidence="2">
    <location>
        <position position="182"/>
    </location>
    <ligand>
        <name>heme b</name>
        <dbReference type="ChEBI" id="CHEBI:60344"/>
        <label>b562</label>
    </ligand>
    <ligandPart>
        <name>Fe</name>
        <dbReference type="ChEBI" id="CHEBI:18248"/>
    </ligandPart>
</feature>
<feature type="binding site" description="axial binding residue" evidence="2">
    <location>
        <position position="196"/>
    </location>
    <ligand>
        <name>heme b</name>
        <dbReference type="ChEBI" id="CHEBI:60344"/>
        <label>b566</label>
    </ligand>
    <ligandPart>
        <name>Fe</name>
        <dbReference type="ChEBI" id="CHEBI:18248"/>
    </ligandPart>
</feature>
<feature type="binding site" evidence="2">
    <location>
        <position position="201"/>
    </location>
    <ligand>
        <name>a ubiquinone</name>
        <dbReference type="ChEBI" id="CHEBI:16389"/>
    </ligand>
</feature>
<comment type="function">
    <text evidence="2">Component of the ubiquinol-cytochrome c reductase complex (complex III or cytochrome b-c1 complex) that is part of the mitochondrial respiratory chain. The b-c1 complex mediates electron transfer from ubiquinol to cytochrome c. Contributes to the generation of a proton gradient across the mitochondrial membrane that is then used for ATP synthesis.</text>
</comment>
<comment type="cofactor">
    <cofactor evidence="2">
        <name>heme b</name>
        <dbReference type="ChEBI" id="CHEBI:60344"/>
    </cofactor>
    <text evidence="2">Binds 2 heme b groups non-covalently.</text>
</comment>
<comment type="subunit">
    <text evidence="2">The cytochrome bc1 complex contains 11 subunits: 3 respiratory subunits (MT-CYB, CYC1 and UQCRFS1), 2 core proteins (UQCRC1 and UQCRC2) and 6 low-molecular weight proteins (UQCRH/QCR6, UQCRB/QCR7, UQCRQ/QCR8, UQCR10/QCR9, UQCR11/QCR10 and a cleavage product of UQCRFS1). This cytochrome bc1 complex then forms a dimer.</text>
</comment>
<comment type="subcellular location">
    <subcellularLocation>
        <location evidence="2">Mitochondrion inner membrane</location>
        <topology evidence="2">Multi-pass membrane protein</topology>
    </subcellularLocation>
</comment>
<comment type="miscellaneous">
    <text evidence="1">Heme 1 (or BL or b562) is low-potential and absorbs at about 562 nm, and heme 2 (or BH or b566) is high-potential and absorbs at about 566 nm.</text>
</comment>
<comment type="similarity">
    <text evidence="3 4">Belongs to the cytochrome b family.</text>
</comment>
<comment type="caution">
    <text evidence="2">The full-length protein contains only eight transmembrane helices, not nine as predicted by bioinformatics tools.</text>
</comment>
<proteinExistence type="inferred from homology"/>
<dbReference type="EMBL" id="AJ841958">
    <property type="protein sequence ID" value="CAH56551.1"/>
    <property type="molecule type" value="Genomic_DNA"/>
</dbReference>
<dbReference type="GO" id="GO:0005743">
    <property type="term" value="C:mitochondrial inner membrane"/>
    <property type="evidence" value="ECO:0007669"/>
    <property type="project" value="UniProtKB-SubCell"/>
</dbReference>
<dbReference type="GO" id="GO:0045275">
    <property type="term" value="C:respiratory chain complex III"/>
    <property type="evidence" value="ECO:0007669"/>
    <property type="project" value="InterPro"/>
</dbReference>
<dbReference type="GO" id="GO:0046872">
    <property type="term" value="F:metal ion binding"/>
    <property type="evidence" value="ECO:0007669"/>
    <property type="project" value="UniProtKB-KW"/>
</dbReference>
<dbReference type="GO" id="GO:0008121">
    <property type="term" value="F:ubiquinol-cytochrome-c reductase activity"/>
    <property type="evidence" value="ECO:0007669"/>
    <property type="project" value="InterPro"/>
</dbReference>
<dbReference type="GO" id="GO:0006122">
    <property type="term" value="P:mitochondrial electron transport, ubiquinol to cytochrome c"/>
    <property type="evidence" value="ECO:0007669"/>
    <property type="project" value="TreeGrafter"/>
</dbReference>
<dbReference type="CDD" id="cd00290">
    <property type="entry name" value="cytochrome_b_C"/>
    <property type="match status" value="1"/>
</dbReference>
<dbReference type="CDD" id="cd00284">
    <property type="entry name" value="Cytochrome_b_N"/>
    <property type="match status" value="1"/>
</dbReference>
<dbReference type="FunFam" id="1.20.810.10:FF:000002">
    <property type="entry name" value="Cytochrome b"/>
    <property type="match status" value="1"/>
</dbReference>
<dbReference type="Gene3D" id="1.20.810.10">
    <property type="entry name" value="Cytochrome Bc1 Complex, Chain C"/>
    <property type="match status" value="1"/>
</dbReference>
<dbReference type="InterPro" id="IPR005798">
    <property type="entry name" value="Cyt_b/b6_C"/>
</dbReference>
<dbReference type="InterPro" id="IPR036150">
    <property type="entry name" value="Cyt_b/b6_C_sf"/>
</dbReference>
<dbReference type="InterPro" id="IPR005797">
    <property type="entry name" value="Cyt_b/b6_N"/>
</dbReference>
<dbReference type="InterPro" id="IPR027387">
    <property type="entry name" value="Cytb/b6-like_sf"/>
</dbReference>
<dbReference type="InterPro" id="IPR030689">
    <property type="entry name" value="Cytochrome_b"/>
</dbReference>
<dbReference type="InterPro" id="IPR048260">
    <property type="entry name" value="Cytochrome_b_C_euk/bac"/>
</dbReference>
<dbReference type="InterPro" id="IPR048259">
    <property type="entry name" value="Cytochrome_b_N_euk/bac"/>
</dbReference>
<dbReference type="InterPro" id="IPR016174">
    <property type="entry name" value="Di-haem_cyt_TM"/>
</dbReference>
<dbReference type="PANTHER" id="PTHR19271">
    <property type="entry name" value="CYTOCHROME B"/>
    <property type="match status" value="1"/>
</dbReference>
<dbReference type="PANTHER" id="PTHR19271:SF16">
    <property type="entry name" value="CYTOCHROME B"/>
    <property type="match status" value="1"/>
</dbReference>
<dbReference type="Pfam" id="PF00032">
    <property type="entry name" value="Cytochrom_B_C"/>
    <property type="match status" value="1"/>
</dbReference>
<dbReference type="Pfam" id="PF00033">
    <property type="entry name" value="Cytochrome_B"/>
    <property type="match status" value="1"/>
</dbReference>
<dbReference type="PIRSF" id="PIRSF038885">
    <property type="entry name" value="COB"/>
    <property type="match status" value="1"/>
</dbReference>
<dbReference type="SUPFAM" id="SSF81648">
    <property type="entry name" value="a domain/subunit of cytochrome bc1 complex (Ubiquinol-cytochrome c reductase)"/>
    <property type="match status" value="1"/>
</dbReference>
<dbReference type="SUPFAM" id="SSF81342">
    <property type="entry name" value="Transmembrane di-heme cytochromes"/>
    <property type="match status" value="1"/>
</dbReference>
<dbReference type="PROSITE" id="PS51003">
    <property type="entry name" value="CYTB_CTER"/>
    <property type="match status" value="1"/>
</dbReference>
<dbReference type="PROSITE" id="PS51002">
    <property type="entry name" value="CYTB_NTER"/>
    <property type="match status" value="1"/>
</dbReference>
<reference key="1">
    <citation type="journal article" date="2004" name="Acta Chiropt.">
        <title>Phylogeny of African myotis bats (Chiroptera, Vespertilionidae) inferred from cytochrome b sequences.</title>
        <authorList>
            <person name="Stadelmann B."/>
            <person name="Jacobs D.S."/>
            <person name="Schoeman C."/>
            <person name="Ruedi M."/>
        </authorList>
    </citation>
    <scope>NUCLEOTIDE SEQUENCE [GENOMIC DNA]</scope>
    <source>
        <tissue>Liver</tissue>
    </source>
</reference>
<evidence type="ECO:0000250" key="1"/>
<evidence type="ECO:0000250" key="2">
    <source>
        <dbReference type="UniProtKB" id="P00157"/>
    </source>
</evidence>
<evidence type="ECO:0000255" key="3">
    <source>
        <dbReference type="PROSITE-ProRule" id="PRU00967"/>
    </source>
</evidence>
<evidence type="ECO:0000255" key="4">
    <source>
        <dbReference type="PROSITE-ProRule" id="PRU00968"/>
    </source>
</evidence>
<organism>
    <name type="scientific">Myotis scotti</name>
    <name type="common">Scott's mouse-eared bat</name>
    <dbReference type="NCBI Taxonomy" id="294648"/>
    <lineage>
        <taxon>Eukaryota</taxon>
        <taxon>Metazoa</taxon>
        <taxon>Chordata</taxon>
        <taxon>Craniata</taxon>
        <taxon>Vertebrata</taxon>
        <taxon>Euteleostomi</taxon>
        <taxon>Mammalia</taxon>
        <taxon>Eutheria</taxon>
        <taxon>Laurasiatheria</taxon>
        <taxon>Chiroptera</taxon>
        <taxon>Yangochiroptera</taxon>
        <taxon>Vespertilionidae</taxon>
        <taxon>Myotis</taxon>
    </lineage>
</organism>
<geneLocation type="mitochondrion"/>
<protein>
    <recommendedName>
        <fullName>Cytochrome b</fullName>
    </recommendedName>
    <alternativeName>
        <fullName>Complex III subunit 3</fullName>
    </alternativeName>
    <alternativeName>
        <fullName>Complex III subunit III</fullName>
    </alternativeName>
    <alternativeName>
        <fullName>Cytochrome b-c1 complex subunit 3</fullName>
    </alternativeName>
    <alternativeName>
        <fullName>Ubiquinol-cytochrome-c reductase complex cytochrome b subunit</fullName>
    </alternativeName>
</protein>
<sequence>MTNIRKSHPLLKIINNAFIDLPTPSNISSWWNFGSLLGICLTLQILTGLFLAMHYTSDTATAFNSITHICRDVNYGWILRYAHANGASMFFICLYLHVGRGLYYGSYVYTETWNIGVILLFTVMATAFMGYVLPWGQMSFWGATVITNLLSAIPYIGTSLVEWIWGGFSVDKATLTRFFAFHFLLPFIISAMVTVHLLFLHETGSNNPTGIPSNTDMIPFHPYYTIKDILGLLLMITLLLTLVLFSPDMLGDPDNYLPANPLNTPPHIKPEWYFLFAYAILRSIPNKLGGVMALVISILILIIIPLLHTSKQRSMAFRPLSQCLFWLLVADLLTLTWIGGQPVEXPXXXXGQMASILYFSIIIILMPLTSLVENHLLKW</sequence>
<keyword id="KW-0249">Electron transport</keyword>
<keyword id="KW-0349">Heme</keyword>
<keyword id="KW-0408">Iron</keyword>
<keyword id="KW-0472">Membrane</keyword>
<keyword id="KW-0479">Metal-binding</keyword>
<keyword id="KW-0496">Mitochondrion</keyword>
<keyword id="KW-0999">Mitochondrion inner membrane</keyword>
<keyword id="KW-0679">Respiratory chain</keyword>
<keyword id="KW-0812">Transmembrane</keyword>
<keyword id="KW-1133">Transmembrane helix</keyword>
<keyword id="KW-0813">Transport</keyword>
<keyword id="KW-0830">Ubiquinone</keyword>